<name>ZN675_HUMAN</name>
<accession>Q8TD23</accession>
<accession>Q8N211</accession>
<gene>
    <name type="primary">ZNF675</name>
    <name type="synonym">TIZ</name>
</gene>
<evidence type="ECO:0000255" key="1">
    <source>
        <dbReference type="PROSITE-ProRule" id="PRU00042"/>
    </source>
</evidence>
<evidence type="ECO:0000255" key="2">
    <source>
        <dbReference type="PROSITE-ProRule" id="PRU00119"/>
    </source>
</evidence>
<evidence type="ECO:0000269" key="3">
    <source>
    </source>
</evidence>
<evidence type="ECO:0000269" key="4">
    <source>
    </source>
</evidence>
<evidence type="ECO:0000305" key="5"/>
<keyword id="KW-0238">DNA-binding</keyword>
<keyword id="KW-0479">Metal-binding</keyword>
<keyword id="KW-0539">Nucleus</keyword>
<keyword id="KW-1267">Proteomics identification</keyword>
<keyword id="KW-1185">Reference proteome</keyword>
<keyword id="KW-0677">Repeat</keyword>
<keyword id="KW-0804">Transcription</keyword>
<keyword id="KW-0805">Transcription regulation</keyword>
<keyword id="KW-0862">Zinc</keyword>
<keyword id="KW-0863">Zinc-finger</keyword>
<sequence length="568" mass="66299">MGLLTFRDVAIEFSLEEWQCLDTAQRNLYKNVILENYRNLVFLGIAVSKQDLITCLEQEKEPLTVKRHEMVNEPPVMCSHFAQEFWPEQNIKDSFEKVTLRRYEKCGNDNFQLKGCKSVDECKLHKGGYNGLNQCLPTMQSKMFQCDKYVKVFNKFSHSDRHKIKHMENKPFKCKECGRSFCMLSHLTRHERNYTKVNFCKCEECEKAVNQSSKLTKHKRIYTCEKLYKCQECDRTFNQFSNLTEYKKDYAREKPYKCEECGKAFNQSSHLTTHKIIHTGEKPYKCEECGKAFNQFSNLTTHKKIHTGEQPYICEECGKAFTQSSTLTTHKRIHTGEKPYKCEECGKAFNRSSKLTEHKNIHTGEQPYKCEECGKAFNRSSNLTEHRKIHTEEKPYKCKECGKAFKHSSALTTHKRIHTGEKPYKCEECGKAFNRSSKLTEHKKLHTGKKPYKCEECGKAFIQSSKLTEHKKIHSGEIPYKCEECGKAFKHSSSLTTHKRIHTGEKPYKCEECGKAFSRSSKLTEHKIIHTGEKPYKCERCDKAFNQSANLTKHKKIHTGEKLQNWNV</sequence>
<reference key="1">
    <citation type="journal article" date="2002" name="J. Biol. Chem.">
        <title>A novel zinc finger protein that inhibits osteoclastogenesis and the function of tumor necrosis factor receptor-associated factor 6.</title>
        <authorList>
            <person name="Shin J.N."/>
            <person name="Kim I."/>
            <person name="Lee J.S."/>
            <person name="Koh G.Y."/>
            <person name="Lee Z.H."/>
            <person name="Kim H.-H."/>
        </authorList>
    </citation>
    <scope>NUCLEOTIDE SEQUENCE [MRNA]</scope>
    <scope>INTERACTION WITH TRAF6</scope>
    <scope>VARIANT VAL-124</scope>
</reference>
<reference key="2">
    <citation type="journal article" date="2004" name="Nat. Genet.">
        <title>Complete sequencing and characterization of 21,243 full-length human cDNAs.</title>
        <authorList>
            <person name="Ota T."/>
            <person name="Suzuki Y."/>
            <person name="Nishikawa T."/>
            <person name="Otsuki T."/>
            <person name="Sugiyama T."/>
            <person name="Irie R."/>
            <person name="Wakamatsu A."/>
            <person name="Hayashi K."/>
            <person name="Sato H."/>
            <person name="Nagai K."/>
            <person name="Kimura K."/>
            <person name="Makita H."/>
            <person name="Sekine M."/>
            <person name="Obayashi M."/>
            <person name="Nishi T."/>
            <person name="Shibahara T."/>
            <person name="Tanaka T."/>
            <person name="Ishii S."/>
            <person name="Yamamoto J."/>
            <person name="Saito K."/>
            <person name="Kawai Y."/>
            <person name="Isono Y."/>
            <person name="Nakamura Y."/>
            <person name="Nagahari K."/>
            <person name="Murakami K."/>
            <person name="Yasuda T."/>
            <person name="Iwayanagi T."/>
            <person name="Wagatsuma M."/>
            <person name="Shiratori A."/>
            <person name="Sudo H."/>
            <person name="Hosoiri T."/>
            <person name="Kaku Y."/>
            <person name="Kodaira H."/>
            <person name="Kondo H."/>
            <person name="Sugawara M."/>
            <person name="Takahashi M."/>
            <person name="Kanda K."/>
            <person name="Yokoi T."/>
            <person name="Furuya T."/>
            <person name="Kikkawa E."/>
            <person name="Omura Y."/>
            <person name="Abe K."/>
            <person name="Kamihara K."/>
            <person name="Katsuta N."/>
            <person name="Sato K."/>
            <person name="Tanikawa M."/>
            <person name="Yamazaki M."/>
            <person name="Ninomiya K."/>
            <person name="Ishibashi T."/>
            <person name="Yamashita H."/>
            <person name="Murakawa K."/>
            <person name="Fujimori K."/>
            <person name="Tanai H."/>
            <person name="Kimata M."/>
            <person name="Watanabe M."/>
            <person name="Hiraoka S."/>
            <person name="Chiba Y."/>
            <person name="Ishida S."/>
            <person name="Ono Y."/>
            <person name="Takiguchi S."/>
            <person name="Watanabe S."/>
            <person name="Yosida M."/>
            <person name="Hotuta T."/>
            <person name="Kusano J."/>
            <person name="Kanehori K."/>
            <person name="Takahashi-Fujii A."/>
            <person name="Hara H."/>
            <person name="Tanase T.-O."/>
            <person name="Nomura Y."/>
            <person name="Togiya S."/>
            <person name="Komai F."/>
            <person name="Hara R."/>
            <person name="Takeuchi K."/>
            <person name="Arita M."/>
            <person name="Imose N."/>
            <person name="Musashino K."/>
            <person name="Yuuki H."/>
            <person name="Oshima A."/>
            <person name="Sasaki N."/>
            <person name="Aotsuka S."/>
            <person name="Yoshikawa Y."/>
            <person name="Matsunawa H."/>
            <person name="Ichihara T."/>
            <person name="Shiohata N."/>
            <person name="Sano S."/>
            <person name="Moriya S."/>
            <person name="Momiyama H."/>
            <person name="Satoh N."/>
            <person name="Takami S."/>
            <person name="Terashima Y."/>
            <person name="Suzuki O."/>
            <person name="Nakagawa S."/>
            <person name="Senoh A."/>
            <person name="Mizoguchi H."/>
            <person name="Goto Y."/>
            <person name="Shimizu F."/>
            <person name="Wakebe H."/>
            <person name="Hishigaki H."/>
            <person name="Watanabe T."/>
            <person name="Sugiyama A."/>
            <person name="Takemoto M."/>
            <person name="Kawakami B."/>
            <person name="Yamazaki M."/>
            <person name="Watanabe K."/>
            <person name="Kumagai A."/>
            <person name="Itakura S."/>
            <person name="Fukuzumi Y."/>
            <person name="Fujimori Y."/>
            <person name="Komiyama M."/>
            <person name="Tashiro H."/>
            <person name="Tanigami A."/>
            <person name="Fujiwara T."/>
            <person name="Ono T."/>
            <person name="Yamada K."/>
            <person name="Fujii Y."/>
            <person name="Ozaki K."/>
            <person name="Hirao M."/>
            <person name="Ohmori Y."/>
            <person name="Kawabata A."/>
            <person name="Hikiji T."/>
            <person name="Kobatake N."/>
            <person name="Inagaki H."/>
            <person name="Ikema Y."/>
            <person name="Okamoto S."/>
            <person name="Okitani R."/>
            <person name="Kawakami T."/>
            <person name="Noguchi S."/>
            <person name="Itoh T."/>
            <person name="Shigeta K."/>
            <person name="Senba T."/>
            <person name="Matsumura K."/>
            <person name="Nakajima Y."/>
            <person name="Mizuno T."/>
            <person name="Morinaga M."/>
            <person name="Sasaki M."/>
            <person name="Togashi T."/>
            <person name="Oyama M."/>
            <person name="Hata H."/>
            <person name="Watanabe M."/>
            <person name="Komatsu T."/>
            <person name="Mizushima-Sugano J."/>
            <person name="Satoh T."/>
            <person name="Shirai Y."/>
            <person name="Takahashi Y."/>
            <person name="Nakagawa K."/>
            <person name="Okumura K."/>
            <person name="Nagase T."/>
            <person name="Nomura N."/>
            <person name="Kikuchi H."/>
            <person name="Masuho Y."/>
            <person name="Yamashita R."/>
            <person name="Nakai K."/>
            <person name="Yada T."/>
            <person name="Nakamura Y."/>
            <person name="Ohara O."/>
            <person name="Isogai T."/>
            <person name="Sugano S."/>
        </authorList>
    </citation>
    <scope>NUCLEOTIDE SEQUENCE [LARGE SCALE MRNA]</scope>
    <scope>VARIANT VAL-124</scope>
    <source>
        <tissue>Thymus</tissue>
    </source>
</reference>
<reference key="3">
    <citation type="journal article" date="2004" name="Nature">
        <title>The DNA sequence and biology of human chromosome 19.</title>
        <authorList>
            <person name="Grimwood J."/>
            <person name="Gordon L.A."/>
            <person name="Olsen A.S."/>
            <person name="Terry A."/>
            <person name="Schmutz J."/>
            <person name="Lamerdin J.E."/>
            <person name="Hellsten U."/>
            <person name="Goodstein D."/>
            <person name="Couronne O."/>
            <person name="Tran-Gyamfi M."/>
            <person name="Aerts A."/>
            <person name="Altherr M."/>
            <person name="Ashworth L."/>
            <person name="Bajorek E."/>
            <person name="Black S."/>
            <person name="Branscomb E."/>
            <person name="Caenepeel S."/>
            <person name="Carrano A.V."/>
            <person name="Caoile C."/>
            <person name="Chan Y.M."/>
            <person name="Christensen M."/>
            <person name="Cleland C.A."/>
            <person name="Copeland A."/>
            <person name="Dalin E."/>
            <person name="Dehal P."/>
            <person name="Denys M."/>
            <person name="Detter J.C."/>
            <person name="Escobar J."/>
            <person name="Flowers D."/>
            <person name="Fotopulos D."/>
            <person name="Garcia C."/>
            <person name="Georgescu A.M."/>
            <person name="Glavina T."/>
            <person name="Gomez M."/>
            <person name="Gonzales E."/>
            <person name="Groza M."/>
            <person name="Hammon N."/>
            <person name="Hawkins T."/>
            <person name="Haydu L."/>
            <person name="Ho I."/>
            <person name="Huang W."/>
            <person name="Israni S."/>
            <person name="Jett J."/>
            <person name="Kadner K."/>
            <person name="Kimball H."/>
            <person name="Kobayashi A."/>
            <person name="Larionov V."/>
            <person name="Leem S.-H."/>
            <person name="Lopez F."/>
            <person name="Lou Y."/>
            <person name="Lowry S."/>
            <person name="Malfatti S."/>
            <person name="Martinez D."/>
            <person name="McCready P.M."/>
            <person name="Medina C."/>
            <person name="Morgan J."/>
            <person name="Nelson K."/>
            <person name="Nolan M."/>
            <person name="Ovcharenko I."/>
            <person name="Pitluck S."/>
            <person name="Pollard M."/>
            <person name="Popkie A.P."/>
            <person name="Predki P."/>
            <person name="Quan G."/>
            <person name="Ramirez L."/>
            <person name="Rash S."/>
            <person name="Retterer J."/>
            <person name="Rodriguez A."/>
            <person name="Rogers S."/>
            <person name="Salamov A."/>
            <person name="Salazar A."/>
            <person name="She X."/>
            <person name="Smith D."/>
            <person name="Slezak T."/>
            <person name="Solovyev V."/>
            <person name="Thayer N."/>
            <person name="Tice H."/>
            <person name="Tsai M."/>
            <person name="Ustaszewska A."/>
            <person name="Vo N."/>
            <person name="Wagner M."/>
            <person name="Wheeler J."/>
            <person name="Wu K."/>
            <person name="Xie G."/>
            <person name="Yang J."/>
            <person name="Dubchak I."/>
            <person name="Furey T.S."/>
            <person name="DeJong P."/>
            <person name="Dickson M."/>
            <person name="Gordon D."/>
            <person name="Eichler E.E."/>
            <person name="Pennacchio L.A."/>
            <person name="Richardson P."/>
            <person name="Stubbs L."/>
            <person name="Rokhsar D.S."/>
            <person name="Myers R.M."/>
            <person name="Rubin E.M."/>
            <person name="Lucas S.M."/>
        </authorList>
    </citation>
    <scope>NUCLEOTIDE SEQUENCE [LARGE SCALE GENOMIC DNA]</scope>
</reference>
<dbReference type="EMBL" id="AY044432">
    <property type="protein sequence ID" value="AAK95822.1"/>
    <property type="molecule type" value="mRNA"/>
</dbReference>
<dbReference type="EMBL" id="AK093669">
    <property type="protein sequence ID" value="BAC04216.1"/>
    <property type="molecule type" value="mRNA"/>
</dbReference>
<dbReference type="EMBL" id="AC073544">
    <property type="status" value="NOT_ANNOTATED_CDS"/>
    <property type="molecule type" value="Genomic_DNA"/>
</dbReference>
<dbReference type="CCDS" id="CCDS32981.1"/>
<dbReference type="PIR" id="F42075">
    <property type="entry name" value="F42075"/>
</dbReference>
<dbReference type="RefSeq" id="NP_612203.2">
    <property type="nucleotide sequence ID" value="NM_138330.3"/>
</dbReference>
<dbReference type="SMR" id="Q8TD23"/>
<dbReference type="BioGRID" id="128116">
    <property type="interactions" value="13"/>
</dbReference>
<dbReference type="FunCoup" id="Q8TD23">
    <property type="interactions" value="527"/>
</dbReference>
<dbReference type="IntAct" id="Q8TD23">
    <property type="interactions" value="9"/>
</dbReference>
<dbReference type="MINT" id="Q8TD23"/>
<dbReference type="STRING" id="9606.ENSP00000352836"/>
<dbReference type="iPTMnet" id="Q8TD23"/>
<dbReference type="PhosphoSitePlus" id="Q8TD23"/>
<dbReference type="BioMuta" id="ZNF675"/>
<dbReference type="DMDM" id="296453065"/>
<dbReference type="jPOST" id="Q8TD23"/>
<dbReference type="MassIVE" id="Q8TD23"/>
<dbReference type="PaxDb" id="9606-ENSP00000352836"/>
<dbReference type="PeptideAtlas" id="Q8TD23"/>
<dbReference type="ProteomicsDB" id="74222"/>
<dbReference type="Antibodypedia" id="28764">
    <property type="antibodies" value="84 antibodies from 14 providers"/>
</dbReference>
<dbReference type="DNASU" id="171392"/>
<dbReference type="Ensembl" id="ENST00000359788.9">
    <property type="protein sequence ID" value="ENSP00000352836.3"/>
    <property type="gene ID" value="ENSG00000197372.10"/>
</dbReference>
<dbReference type="GeneID" id="171392"/>
<dbReference type="KEGG" id="hsa:171392"/>
<dbReference type="MANE-Select" id="ENST00000359788.9">
    <property type="protein sequence ID" value="ENSP00000352836.3"/>
    <property type="RefSeq nucleotide sequence ID" value="NM_138330.3"/>
    <property type="RefSeq protein sequence ID" value="NP_612203.2"/>
</dbReference>
<dbReference type="UCSC" id="uc002nri.4">
    <property type="organism name" value="human"/>
</dbReference>
<dbReference type="AGR" id="HGNC:30768"/>
<dbReference type="CTD" id="171392"/>
<dbReference type="DisGeNET" id="171392"/>
<dbReference type="GeneCards" id="ZNF675"/>
<dbReference type="HGNC" id="HGNC:30768">
    <property type="gene designation" value="ZNF675"/>
</dbReference>
<dbReference type="HPA" id="ENSG00000197372">
    <property type="expression patterns" value="Low tissue specificity"/>
</dbReference>
<dbReference type="MIM" id="620090">
    <property type="type" value="gene"/>
</dbReference>
<dbReference type="neXtProt" id="NX_Q8TD23"/>
<dbReference type="OpenTargets" id="ENSG00000197372"/>
<dbReference type="PharmGKB" id="PA142670476"/>
<dbReference type="VEuPathDB" id="HostDB:ENSG00000197372"/>
<dbReference type="eggNOG" id="KOG1721">
    <property type="taxonomic scope" value="Eukaryota"/>
</dbReference>
<dbReference type="GeneTree" id="ENSGT01130000278311"/>
<dbReference type="HOGENOM" id="CLU_002678_44_0_1"/>
<dbReference type="InParanoid" id="Q8TD23"/>
<dbReference type="OMA" id="CGRSFCM"/>
<dbReference type="OrthoDB" id="4748970at2759"/>
<dbReference type="PAN-GO" id="Q8TD23">
    <property type="GO annotations" value="3 GO annotations based on evolutionary models"/>
</dbReference>
<dbReference type="PhylomeDB" id="Q8TD23"/>
<dbReference type="TreeFam" id="TF342117"/>
<dbReference type="PathwayCommons" id="Q8TD23"/>
<dbReference type="Reactome" id="R-HSA-212436">
    <property type="pathway name" value="Generic Transcription Pathway"/>
</dbReference>
<dbReference type="SignaLink" id="Q8TD23"/>
<dbReference type="BioGRID-ORCS" id="171392">
    <property type="hits" value="14 hits in 1082 CRISPR screens"/>
</dbReference>
<dbReference type="ChiTaRS" id="ZNF675">
    <property type="organism name" value="human"/>
</dbReference>
<dbReference type="GenomeRNAi" id="171392"/>
<dbReference type="Pharos" id="Q8TD23">
    <property type="development level" value="Tbio"/>
</dbReference>
<dbReference type="PRO" id="PR:Q8TD23"/>
<dbReference type="Proteomes" id="UP000005640">
    <property type="component" value="Chromosome 19"/>
</dbReference>
<dbReference type="RNAct" id="Q8TD23">
    <property type="molecule type" value="protein"/>
</dbReference>
<dbReference type="Bgee" id="ENSG00000197372">
    <property type="expression patterns" value="Expressed in primordial germ cell in gonad and 113 other cell types or tissues"/>
</dbReference>
<dbReference type="ExpressionAtlas" id="Q8TD23">
    <property type="expression patterns" value="baseline and differential"/>
</dbReference>
<dbReference type="GO" id="GO:0005634">
    <property type="term" value="C:nucleus"/>
    <property type="evidence" value="ECO:0000314"/>
    <property type="project" value="UniProtKB"/>
</dbReference>
<dbReference type="GO" id="GO:0048471">
    <property type="term" value="C:perinuclear region of cytoplasm"/>
    <property type="evidence" value="ECO:0000314"/>
    <property type="project" value="BHF-UCL"/>
</dbReference>
<dbReference type="GO" id="GO:0003677">
    <property type="term" value="F:DNA binding"/>
    <property type="evidence" value="ECO:0000303"/>
    <property type="project" value="UniProtKB"/>
</dbReference>
<dbReference type="GO" id="GO:0000981">
    <property type="term" value="F:DNA-binding transcription factor activity, RNA polymerase II-specific"/>
    <property type="evidence" value="ECO:0000318"/>
    <property type="project" value="GO_Central"/>
</dbReference>
<dbReference type="GO" id="GO:0000978">
    <property type="term" value="F:RNA polymerase II cis-regulatory region sequence-specific DNA binding"/>
    <property type="evidence" value="ECO:0000318"/>
    <property type="project" value="GO_Central"/>
</dbReference>
<dbReference type="GO" id="GO:0031625">
    <property type="term" value="F:ubiquitin protein ligase binding"/>
    <property type="evidence" value="ECO:0000353"/>
    <property type="project" value="BHF-UCL"/>
</dbReference>
<dbReference type="GO" id="GO:0008270">
    <property type="term" value="F:zinc ion binding"/>
    <property type="evidence" value="ECO:0000303"/>
    <property type="project" value="UniProtKB"/>
</dbReference>
<dbReference type="GO" id="GO:0045453">
    <property type="term" value="P:bone resorption"/>
    <property type="evidence" value="ECO:0000304"/>
    <property type="project" value="UniProtKB"/>
</dbReference>
<dbReference type="GO" id="GO:0043124">
    <property type="term" value="P:negative regulation of canonical NF-kappaB signal transduction"/>
    <property type="evidence" value="ECO:0000314"/>
    <property type="project" value="UniProtKB"/>
</dbReference>
<dbReference type="GO" id="GO:0001960">
    <property type="term" value="P:negative regulation of cytokine-mediated signaling pathway"/>
    <property type="evidence" value="ECO:0000314"/>
    <property type="project" value="UniProtKB"/>
</dbReference>
<dbReference type="GO" id="GO:2000660">
    <property type="term" value="P:negative regulation of interleukin-1-mediated signaling pathway"/>
    <property type="evidence" value="ECO:0000314"/>
    <property type="project" value="BHF-UCL"/>
</dbReference>
<dbReference type="GO" id="GO:0046329">
    <property type="term" value="P:negative regulation of JNK cascade"/>
    <property type="evidence" value="ECO:0000314"/>
    <property type="project" value="UniProtKB"/>
</dbReference>
<dbReference type="GO" id="GO:0045671">
    <property type="term" value="P:negative regulation of osteoclast differentiation"/>
    <property type="evidence" value="ECO:0000314"/>
    <property type="project" value="UniProtKB"/>
</dbReference>
<dbReference type="GO" id="GO:0000122">
    <property type="term" value="P:negative regulation of transcription by RNA polymerase II"/>
    <property type="evidence" value="ECO:0000314"/>
    <property type="project" value="BHF-UCL"/>
</dbReference>
<dbReference type="GO" id="GO:0010804">
    <property type="term" value="P:negative regulation of tumor necrosis factor-mediated signaling pathway"/>
    <property type="evidence" value="ECO:0000314"/>
    <property type="project" value="BHF-UCL"/>
</dbReference>
<dbReference type="GO" id="GO:0006355">
    <property type="term" value="P:regulation of DNA-templated transcription"/>
    <property type="evidence" value="ECO:0000318"/>
    <property type="project" value="GO_Central"/>
</dbReference>
<dbReference type="CDD" id="cd07765">
    <property type="entry name" value="KRAB_A-box"/>
    <property type="match status" value="1"/>
</dbReference>
<dbReference type="FunFam" id="3.30.160.60:FF:000446">
    <property type="entry name" value="Zinc finger protein"/>
    <property type="match status" value="1"/>
</dbReference>
<dbReference type="FunFam" id="3.30.160.60:FF:000524">
    <property type="entry name" value="Zinc finger protein 155"/>
    <property type="match status" value="1"/>
</dbReference>
<dbReference type="FunFam" id="3.30.160.60:FF:000034">
    <property type="entry name" value="zinc finger protein 25"/>
    <property type="match status" value="2"/>
</dbReference>
<dbReference type="FunFam" id="3.30.160.60:FF:001868">
    <property type="entry name" value="Zinc finger protein 264"/>
    <property type="match status" value="3"/>
</dbReference>
<dbReference type="FunFam" id="3.30.160.60:FF:000120">
    <property type="entry name" value="Zinc finger protein 430"/>
    <property type="match status" value="3"/>
</dbReference>
<dbReference type="FunFam" id="3.30.160.60:FF:002254">
    <property type="entry name" value="Zinc finger protein 540"/>
    <property type="match status" value="1"/>
</dbReference>
<dbReference type="FunFam" id="3.30.160.60:FF:000895">
    <property type="entry name" value="Zinc finger protein 597"/>
    <property type="match status" value="1"/>
</dbReference>
<dbReference type="FunFam" id="3.30.160.60:FF:002483">
    <property type="entry name" value="Zinc finger protein 90"/>
    <property type="match status" value="1"/>
</dbReference>
<dbReference type="Gene3D" id="6.10.140.140">
    <property type="match status" value="1"/>
</dbReference>
<dbReference type="Gene3D" id="3.30.160.60">
    <property type="entry name" value="Classic Zinc Finger"/>
    <property type="match status" value="14"/>
</dbReference>
<dbReference type="InterPro" id="IPR001909">
    <property type="entry name" value="KRAB"/>
</dbReference>
<dbReference type="InterPro" id="IPR036051">
    <property type="entry name" value="KRAB_dom_sf"/>
</dbReference>
<dbReference type="InterPro" id="IPR036236">
    <property type="entry name" value="Znf_C2H2_sf"/>
</dbReference>
<dbReference type="InterPro" id="IPR013087">
    <property type="entry name" value="Znf_C2H2_type"/>
</dbReference>
<dbReference type="PANTHER" id="PTHR24376">
    <property type="entry name" value="ZINC FINGER PROTEIN"/>
    <property type="match status" value="1"/>
</dbReference>
<dbReference type="PANTHER" id="PTHR24376:SF210">
    <property type="entry name" value="ZINC FINGER PROTEIN 721-RELATED"/>
    <property type="match status" value="1"/>
</dbReference>
<dbReference type="Pfam" id="PF01352">
    <property type="entry name" value="KRAB"/>
    <property type="match status" value="1"/>
</dbReference>
<dbReference type="Pfam" id="PF00096">
    <property type="entry name" value="zf-C2H2"/>
    <property type="match status" value="12"/>
</dbReference>
<dbReference type="SMART" id="SM00349">
    <property type="entry name" value="KRAB"/>
    <property type="match status" value="1"/>
</dbReference>
<dbReference type="SMART" id="SM00355">
    <property type="entry name" value="ZnF_C2H2"/>
    <property type="match status" value="13"/>
</dbReference>
<dbReference type="SUPFAM" id="SSF57667">
    <property type="entry name" value="beta-beta-alpha zinc fingers"/>
    <property type="match status" value="8"/>
</dbReference>
<dbReference type="SUPFAM" id="SSF109640">
    <property type="entry name" value="KRAB domain (Kruppel-associated box)"/>
    <property type="match status" value="1"/>
</dbReference>
<dbReference type="PROSITE" id="PS50805">
    <property type="entry name" value="KRAB"/>
    <property type="match status" value="1"/>
</dbReference>
<dbReference type="PROSITE" id="PS00028">
    <property type="entry name" value="ZINC_FINGER_C2H2_1"/>
    <property type="match status" value="11"/>
</dbReference>
<dbReference type="PROSITE" id="PS50157">
    <property type="entry name" value="ZINC_FINGER_C2H2_2"/>
    <property type="match status" value="14"/>
</dbReference>
<protein>
    <recommendedName>
        <fullName>Zinc finger protein 675</fullName>
    </recommendedName>
    <alternativeName>
        <fullName>TRAF6-binding zinc finger protein</fullName>
    </alternativeName>
    <alternativeName>
        <fullName>TRAF6-inhibitory zinc finger protein</fullName>
    </alternativeName>
</protein>
<feature type="chain" id="PRO_0000304875" description="Zinc finger protein 675">
    <location>
        <begin position="1"/>
        <end position="568"/>
    </location>
</feature>
<feature type="domain" description="KRAB" evidence="2">
    <location>
        <begin position="4"/>
        <end position="75"/>
    </location>
</feature>
<feature type="zinc finger region" description="C2H2-type 1; degenerate" evidence="1">
    <location>
        <begin position="144"/>
        <end position="166"/>
    </location>
</feature>
<feature type="zinc finger region" description="C2H2-type 2; degenerate" evidence="1">
    <location>
        <begin position="172"/>
        <end position="194"/>
    </location>
</feature>
<feature type="zinc finger region" description="C2H2-type 3; degenerate" evidence="1">
    <location>
        <begin position="200"/>
        <end position="222"/>
    </location>
</feature>
<feature type="zinc finger region" description="C2H2-type 4; degenerate" evidence="1">
    <location>
        <begin position="228"/>
        <end position="250"/>
    </location>
</feature>
<feature type="zinc finger region" description="C2H2-type 5" evidence="1">
    <location>
        <begin position="256"/>
        <end position="278"/>
    </location>
</feature>
<feature type="zinc finger region" description="C2H2-type 6" evidence="1">
    <location>
        <begin position="284"/>
        <end position="306"/>
    </location>
</feature>
<feature type="zinc finger region" description="C2H2-type 7" evidence="1">
    <location>
        <begin position="312"/>
        <end position="334"/>
    </location>
</feature>
<feature type="zinc finger region" description="C2H2-type 8" evidence="1">
    <location>
        <begin position="340"/>
        <end position="362"/>
    </location>
</feature>
<feature type="zinc finger region" description="C2H2-type 9" evidence="1">
    <location>
        <begin position="368"/>
        <end position="390"/>
    </location>
</feature>
<feature type="zinc finger region" description="C2H2-type 10" evidence="1">
    <location>
        <begin position="396"/>
        <end position="418"/>
    </location>
</feature>
<feature type="zinc finger region" description="C2H2-type 11" evidence="1">
    <location>
        <begin position="424"/>
        <end position="446"/>
    </location>
</feature>
<feature type="zinc finger region" description="C2H2-type 12" evidence="1">
    <location>
        <begin position="452"/>
        <end position="474"/>
    </location>
</feature>
<feature type="zinc finger region" description="C2H2-type 13" evidence="1">
    <location>
        <begin position="480"/>
        <end position="502"/>
    </location>
</feature>
<feature type="zinc finger region" description="C2H2-type 14" evidence="1">
    <location>
        <begin position="508"/>
        <end position="530"/>
    </location>
</feature>
<feature type="zinc finger region" description="C2H2-type 15" evidence="1">
    <location>
        <begin position="536"/>
        <end position="558"/>
    </location>
</feature>
<feature type="sequence variant" id="VAR_060430" description="In dbSNP:rs4380159." evidence="3 4">
    <original>L</original>
    <variation>V</variation>
    <location>
        <position position="124"/>
    </location>
</feature>
<feature type="sequence variant" id="VAR_057440" description="In dbSNP:rs11671053.">
    <original>V</original>
    <variation>A</variation>
    <location>
        <position position="197"/>
    </location>
</feature>
<feature type="sequence variant" id="VAR_060431" description="In dbSNP:rs73029758.">
    <original>A</original>
    <variation>T</variation>
    <location>
        <position position="410"/>
    </location>
</feature>
<feature type="sequence conflict" description="In Ref. 1; AAK95822." evidence="5" ref="1">
    <original>Y</original>
    <variation>C</variation>
    <location>
        <position position="29"/>
    </location>
</feature>
<feature type="sequence conflict" description="In Ref. 1; AAK95822." evidence="5" ref="1">
    <original>K</original>
    <variation>E</variation>
    <location>
        <position position="148"/>
    </location>
</feature>
<feature type="sequence conflict" description="In Ref. 2; BAC04216." evidence="5" ref="2">
    <location>
        <begin position="191"/>
        <end position="218"/>
    </location>
</feature>
<feature type="sequence conflict" description="In Ref. 1; AAK95822." evidence="5" ref="1">
    <original>F</original>
    <variation>S</variation>
    <location>
        <position position="293"/>
    </location>
</feature>
<feature type="sequence conflict" description="In Ref. 1; AAK95822." evidence="5" ref="1">
    <original>H</original>
    <variation>Y</variation>
    <location>
        <position position="442"/>
    </location>
</feature>
<feature type="sequence conflict" description="In Ref. 1; AAK95822." evidence="5" ref="1">
    <original>G</original>
    <variation>S</variation>
    <location>
        <position position="514"/>
    </location>
</feature>
<feature type="sequence conflict" description="In Ref. 1; AAK95822." evidence="5" ref="1">
    <original>K</original>
    <variation>E</variation>
    <location>
        <position position="537"/>
    </location>
</feature>
<proteinExistence type="evidence at protein level"/>
<organism>
    <name type="scientific">Homo sapiens</name>
    <name type="common">Human</name>
    <dbReference type="NCBI Taxonomy" id="9606"/>
    <lineage>
        <taxon>Eukaryota</taxon>
        <taxon>Metazoa</taxon>
        <taxon>Chordata</taxon>
        <taxon>Craniata</taxon>
        <taxon>Vertebrata</taxon>
        <taxon>Euteleostomi</taxon>
        <taxon>Mammalia</taxon>
        <taxon>Eutheria</taxon>
        <taxon>Euarchontoglires</taxon>
        <taxon>Primates</taxon>
        <taxon>Haplorrhini</taxon>
        <taxon>Catarrhini</taxon>
        <taxon>Hominidae</taxon>
        <taxon>Homo</taxon>
    </lineage>
</organism>
<comment type="function">
    <text>May be involved in transcriptional regulation. May play a role during osteoclast differentiation by modulating TRAF6 signaling activity.</text>
</comment>
<comment type="subunit">
    <text evidence="3">Interacts with TRAF6.</text>
</comment>
<comment type="interaction">
    <interactant intactId="EBI-528190">
        <id>Q8TD23</id>
    </interactant>
    <interactant intactId="EBI-359276">
        <id>Q9Y4K3</id>
        <label>TRAF6</label>
    </interactant>
    <organismsDiffer>false</organismsDiffer>
    <experiments>4</experiments>
</comment>
<comment type="subcellular location">
    <subcellularLocation>
        <location evidence="5">Nucleus</location>
    </subcellularLocation>
</comment>